<dbReference type="EMBL" id="L42138">
    <property type="protein sequence ID" value="AAB46365.1"/>
    <property type="molecule type" value="mRNA"/>
</dbReference>
<dbReference type="SMR" id="Q25214"/>
<dbReference type="GO" id="GO:0005634">
    <property type="term" value="C:nucleus"/>
    <property type="evidence" value="ECO:0007669"/>
    <property type="project" value="UniProtKB-SubCell"/>
</dbReference>
<dbReference type="GO" id="GO:0005667">
    <property type="term" value="C:transcription regulator complex"/>
    <property type="evidence" value="ECO:0007669"/>
    <property type="project" value="TreeGrafter"/>
</dbReference>
<dbReference type="GO" id="GO:0000981">
    <property type="term" value="F:DNA-binding transcription factor activity, RNA polymerase II-specific"/>
    <property type="evidence" value="ECO:0007669"/>
    <property type="project" value="TreeGrafter"/>
</dbReference>
<dbReference type="GO" id="GO:0000978">
    <property type="term" value="F:RNA polymerase II cis-regulatory region sequence-specific DNA binding"/>
    <property type="evidence" value="ECO:0007669"/>
    <property type="project" value="TreeGrafter"/>
</dbReference>
<dbReference type="GO" id="GO:0008270">
    <property type="term" value="F:zinc ion binding"/>
    <property type="evidence" value="ECO:0007669"/>
    <property type="project" value="UniProtKB-KW"/>
</dbReference>
<dbReference type="GO" id="GO:0048568">
    <property type="term" value="P:embryonic organ development"/>
    <property type="evidence" value="ECO:0007669"/>
    <property type="project" value="TreeGrafter"/>
</dbReference>
<dbReference type="GO" id="GO:0035329">
    <property type="term" value="P:hippo signaling"/>
    <property type="evidence" value="ECO:0007669"/>
    <property type="project" value="TreeGrafter"/>
</dbReference>
<dbReference type="FunFam" id="2.70.50.80:FF:000005">
    <property type="entry name" value="Transcription enhancer factor-like protein egl-44"/>
    <property type="match status" value="1"/>
</dbReference>
<dbReference type="Gene3D" id="2.70.50.80">
    <property type="match status" value="1"/>
</dbReference>
<dbReference type="InterPro" id="IPR050937">
    <property type="entry name" value="TEC1_TEAD_TF"/>
</dbReference>
<dbReference type="InterPro" id="IPR041086">
    <property type="entry name" value="YBD"/>
</dbReference>
<dbReference type="PANTHER" id="PTHR11834:SF0">
    <property type="entry name" value="PROTEIN SCALLOPED"/>
    <property type="match status" value="1"/>
</dbReference>
<dbReference type="PANTHER" id="PTHR11834">
    <property type="entry name" value="TRANSCRIPTIONAL ENHANCER FACTOR TEF RELATED"/>
    <property type="match status" value="1"/>
</dbReference>
<dbReference type="Pfam" id="PF17725">
    <property type="entry name" value="YBD"/>
    <property type="match status" value="1"/>
</dbReference>
<name>SCAL_JUNCO</name>
<keyword id="KW-0010">Activator</keyword>
<keyword id="KW-0217">Developmental protein</keyword>
<keyword id="KW-0238">DNA-binding</keyword>
<keyword id="KW-0479">Metal-binding</keyword>
<keyword id="KW-0539">Nucleus</keyword>
<keyword id="KW-0804">Transcription</keyword>
<keyword id="KW-0805">Transcription regulation</keyword>
<keyword id="KW-0862">Zinc</keyword>
<keyword id="KW-0863">Zinc-finger</keyword>
<protein>
    <recommendedName>
        <fullName>Protein scalloped</fullName>
    </recommendedName>
</protein>
<proteinExistence type="evidence at transcript level"/>
<feature type="chain" id="PRO_0000205943" description="Protein scalloped">
    <location>
        <begin position="1" status="less than"/>
        <end position="136"/>
    </location>
</feature>
<feature type="non-terminal residue">
    <location>
        <position position="1"/>
    </location>
</feature>
<accession>Q25214</accession>
<gene>
    <name type="primary">SD</name>
</gene>
<organism>
    <name type="scientific">Junonia coenia</name>
    <name type="common">Peacock butterfly</name>
    <name type="synonym">Precis coenia</name>
    <dbReference type="NCBI Taxonomy" id="39708"/>
    <lineage>
        <taxon>Eukaryota</taxon>
        <taxon>Metazoa</taxon>
        <taxon>Ecdysozoa</taxon>
        <taxon>Arthropoda</taxon>
        <taxon>Hexapoda</taxon>
        <taxon>Insecta</taxon>
        <taxon>Pterygota</taxon>
        <taxon>Neoptera</taxon>
        <taxon>Endopterygota</taxon>
        <taxon>Lepidoptera</taxon>
        <taxon>Glossata</taxon>
        <taxon>Ditrysia</taxon>
        <taxon>Papilionoidea</taxon>
        <taxon>Nymphalidae</taxon>
        <taxon>Nymphalinae</taxon>
        <taxon>Junonia</taxon>
    </lineage>
</organism>
<sequence>WADLNTNNLDDPGAFYGVTSVYESNENMTITCSTKVCSFGKQVVEKVETEYARNEGGRFVYRIQRSPMCEYMVNFIHKLKHLPEKYMMNSVLENFTILQVVSNRDTQETLLCAAFVFEVSNSEHGAQHHIYRLVKT</sequence>
<reference key="1">
    <citation type="journal article" date="1994" name="Science">
        <title>Pattern formation and eyespot determination in butterfly wings.</title>
        <authorList>
            <person name="Carroll S.B."/>
            <person name="Gates J."/>
            <person name="Keys D.N."/>
            <person name="Paddock S.W."/>
            <person name="Panganiban G.E."/>
            <person name="Selegue J.E."/>
            <person name="Williams J.A."/>
        </authorList>
    </citation>
    <scope>NUCLEOTIDE SEQUENCE [MRNA]</scope>
</reference>
<evidence type="ECO:0000250" key="1"/>
<comment type="function">
    <text evidence="1">Probable transcription factor that function in the regulation of cell-specific gene expression during drosophila development, particularly in the differentiation of the nervous system.</text>
</comment>
<comment type="subcellular location">
    <subcellularLocation>
        <location evidence="1">Nucleus</location>
    </subcellularLocation>
</comment>